<protein>
    <recommendedName>
        <fullName evidence="3">Olfactory receptor 5P51</fullName>
    </recommendedName>
    <alternativeName>
        <fullName>Olfactory receptor 204-22</fullName>
    </alternativeName>
    <alternativeName>
        <fullName>Olfactory receptor 470</fullName>
    </alternativeName>
</protein>
<dbReference type="EMBL" id="AY073673">
    <property type="protein sequence ID" value="AAL61336.1"/>
    <property type="molecule type" value="Genomic_DNA"/>
</dbReference>
<dbReference type="EMBL" id="AY317578">
    <property type="protein sequence ID" value="AAP70976.1"/>
    <property type="molecule type" value="Genomic_DNA"/>
</dbReference>
<dbReference type="CCDS" id="CCDS21694.1"/>
<dbReference type="RefSeq" id="NP_666636.1">
    <property type="nucleotide sequence ID" value="NM_146425.1"/>
</dbReference>
<dbReference type="SMR" id="Q8VF65"/>
<dbReference type="FunCoup" id="Q8VF65">
    <property type="interactions" value="1132"/>
</dbReference>
<dbReference type="STRING" id="10090.ENSMUSP00000151543"/>
<dbReference type="GlyCosmos" id="Q8VF65">
    <property type="glycosylation" value="1 site, No reported glycans"/>
</dbReference>
<dbReference type="GlyGen" id="Q8VF65">
    <property type="glycosylation" value="1 site"/>
</dbReference>
<dbReference type="PaxDb" id="10090-ENSMUSP00000081812"/>
<dbReference type="DNASU" id="258417"/>
<dbReference type="Ensembl" id="ENSMUST00000073059.5">
    <property type="protein sequence ID" value="ENSMUSP00000072810.4"/>
    <property type="gene ID" value="ENSMUSG00000109542.3"/>
</dbReference>
<dbReference type="Ensembl" id="ENSMUST00000220193.2">
    <property type="protein sequence ID" value="ENSMUSP00000151543.2"/>
    <property type="gene ID" value="ENSMUSG00000109542.3"/>
</dbReference>
<dbReference type="GeneID" id="258417"/>
<dbReference type="KEGG" id="mmu:258417"/>
<dbReference type="UCSC" id="uc009jbn.1">
    <property type="organism name" value="mouse"/>
</dbReference>
<dbReference type="AGR" id="MGI:3030304"/>
<dbReference type="CTD" id="258417"/>
<dbReference type="MGI" id="MGI:3030304">
    <property type="gene designation" value="Or5p51"/>
</dbReference>
<dbReference type="VEuPathDB" id="HostDB:ENSMUSG00000109542"/>
<dbReference type="eggNOG" id="ENOG502SKA1">
    <property type="taxonomic scope" value="Eukaryota"/>
</dbReference>
<dbReference type="GeneTree" id="ENSGT01130000278279"/>
<dbReference type="HOGENOM" id="CLU_012526_1_0_1"/>
<dbReference type="InParanoid" id="Q8VF65"/>
<dbReference type="OMA" id="SAEVCAW"/>
<dbReference type="OrthoDB" id="9440694at2759"/>
<dbReference type="PhylomeDB" id="Q8VF65"/>
<dbReference type="TreeFam" id="TF338848"/>
<dbReference type="BioGRID-ORCS" id="258417">
    <property type="hits" value="4 hits in 37 CRISPR screens"/>
</dbReference>
<dbReference type="PRO" id="PR:Q8VF65"/>
<dbReference type="Proteomes" id="UP000000589">
    <property type="component" value="Chromosome 7"/>
</dbReference>
<dbReference type="RNAct" id="Q8VF65">
    <property type="molecule type" value="protein"/>
</dbReference>
<dbReference type="GO" id="GO:0016020">
    <property type="term" value="C:membrane"/>
    <property type="evidence" value="ECO:0000247"/>
    <property type="project" value="MGI"/>
</dbReference>
<dbReference type="GO" id="GO:0005886">
    <property type="term" value="C:plasma membrane"/>
    <property type="evidence" value="ECO:0007669"/>
    <property type="project" value="UniProtKB-SubCell"/>
</dbReference>
<dbReference type="GO" id="GO:0004930">
    <property type="term" value="F:G protein-coupled receptor activity"/>
    <property type="evidence" value="ECO:0007669"/>
    <property type="project" value="UniProtKB-KW"/>
</dbReference>
<dbReference type="GO" id="GO:0004984">
    <property type="term" value="F:olfactory receptor activity"/>
    <property type="evidence" value="ECO:0000247"/>
    <property type="project" value="MGI"/>
</dbReference>
<dbReference type="GO" id="GO:0007186">
    <property type="term" value="P:G protein-coupled receptor signaling pathway"/>
    <property type="evidence" value="ECO:0000247"/>
    <property type="project" value="MGI"/>
</dbReference>
<dbReference type="GO" id="GO:0007608">
    <property type="term" value="P:sensory perception of smell"/>
    <property type="evidence" value="ECO:0000247"/>
    <property type="project" value="MGI"/>
</dbReference>
<dbReference type="FunFam" id="1.20.1070.10:FF:000004">
    <property type="entry name" value="Olfactory receptor"/>
    <property type="match status" value="1"/>
</dbReference>
<dbReference type="Gene3D" id="1.20.1070.10">
    <property type="entry name" value="Rhodopsin 7-helix transmembrane proteins"/>
    <property type="match status" value="1"/>
</dbReference>
<dbReference type="InterPro" id="IPR000276">
    <property type="entry name" value="GPCR_Rhodpsn"/>
</dbReference>
<dbReference type="InterPro" id="IPR017452">
    <property type="entry name" value="GPCR_Rhodpsn_7TM"/>
</dbReference>
<dbReference type="InterPro" id="IPR000725">
    <property type="entry name" value="Olfact_rcpt"/>
</dbReference>
<dbReference type="PANTHER" id="PTHR48018">
    <property type="entry name" value="OLFACTORY RECEPTOR"/>
    <property type="match status" value="1"/>
</dbReference>
<dbReference type="Pfam" id="PF13853">
    <property type="entry name" value="7tm_4"/>
    <property type="match status" value="1"/>
</dbReference>
<dbReference type="PRINTS" id="PR00237">
    <property type="entry name" value="GPCRRHODOPSN"/>
</dbReference>
<dbReference type="PRINTS" id="PR00245">
    <property type="entry name" value="OLFACTORYR"/>
</dbReference>
<dbReference type="SUPFAM" id="SSF81321">
    <property type="entry name" value="Family A G protein-coupled receptor-like"/>
    <property type="match status" value="1"/>
</dbReference>
<dbReference type="PROSITE" id="PS00237">
    <property type="entry name" value="G_PROTEIN_RECEP_F1_1"/>
    <property type="match status" value="1"/>
</dbReference>
<dbReference type="PROSITE" id="PS50262">
    <property type="entry name" value="G_PROTEIN_RECEP_F1_2"/>
    <property type="match status" value="1"/>
</dbReference>
<sequence length="314" mass="34840">MAFLEDGNHTAVTEFVLFGLTDDPVLRVILFIIFLCIYLVNVSGNLSTILLIRVSSQLHHPMYFFLSHLASVDVGYSSTVTPKMLANFLLERSTISYLGCTIQLFSGAFVGTLECFLLATMAYDRFIAICNPLLYSTKMSTQVCIQLLVGSYIGGFLNASSFLLSFFPLLFCGPNRVNHYSCDLTPLIELSCSGSNVPIVPASFCSAFVIIVTVSVIAISYTYILITILKMRSTEGRQKAFSTCTSHLTAVTLYYGTVTFIYVMPKSSYSTDQNKVVSVFYTVVIPMLNPIIYSLRNNEIKGALKRQLARKIFS</sequence>
<proteinExistence type="inferred from homology"/>
<name>O5P51_MOUSE</name>
<feature type="chain" id="PRO_0000150831" description="Olfactory receptor 5P51">
    <location>
        <begin position="1"/>
        <end position="314"/>
    </location>
</feature>
<feature type="topological domain" description="Extracellular" evidence="1">
    <location>
        <begin position="1"/>
        <end position="28"/>
    </location>
</feature>
<feature type="transmembrane region" description="Helical; Name=1" evidence="1">
    <location>
        <begin position="29"/>
        <end position="49"/>
    </location>
</feature>
<feature type="topological domain" description="Cytoplasmic" evidence="1">
    <location>
        <begin position="50"/>
        <end position="57"/>
    </location>
</feature>
<feature type="transmembrane region" description="Helical; Name=2" evidence="1">
    <location>
        <begin position="58"/>
        <end position="78"/>
    </location>
</feature>
<feature type="topological domain" description="Extracellular" evidence="1">
    <location>
        <begin position="79"/>
        <end position="102"/>
    </location>
</feature>
<feature type="transmembrane region" description="Helical; Name=3" evidence="1">
    <location>
        <begin position="103"/>
        <end position="123"/>
    </location>
</feature>
<feature type="topological domain" description="Cytoplasmic" evidence="1">
    <location>
        <begin position="124"/>
        <end position="136"/>
    </location>
</feature>
<feature type="transmembrane region" description="Helical; Name=4" evidence="1">
    <location>
        <begin position="137"/>
        <end position="157"/>
    </location>
</feature>
<feature type="topological domain" description="Extracellular" evidence="1">
    <location>
        <begin position="158"/>
        <end position="199"/>
    </location>
</feature>
<feature type="transmembrane region" description="Helical; Name=5" evidence="1">
    <location>
        <begin position="200"/>
        <end position="220"/>
    </location>
</feature>
<feature type="topological domain" description="Cytoplasmic" evidence="1">
    <location>
        <begin position="221"/>
        <end position="240"/>
    </location>
</feature>
<feature type="transmembrane region" description="Helical; Name=6" evidence="1">
    <location>
        <begin position="241"/>
        <end position="261"/>
    </location>
</feature>
<feature type="topological domain" description="Extracellular" evidence="1">
    <location>
        <begin position="262"/>
        <end position="274"/>
    </location>
</feature>
<feature type="transmembrane region" description="Helical; Name=7" evidence="1">
    <location>
        <begin position="275"/>
        <end position="295"/>
    </location>
</feature>
<feature type="topological domain" description="Cytoplasmic" evidence="1">
    <location>
        <begin position="296"/>
        <end position="314"/>
    </location>
</feature>
<feature type="glycosylation site" description="N-linked (GlcNAc...) asparagine" evidence="1">
    <location>
        <position position="8"/>
    </location>
</feature>
<feature type="disulfide bond" evidence="2">
    <location>
        <begin position="100"/>
        <end position="192"/>
    </location>
</feature>
<accession>Q8VF65</accession>
<organism>
    <name type="scientific">Mus musculus</name>
    <name type="common">Mouse</name>
    <dbReference type="NCBI Taxonomy" id="10090"/>
    <lineage>
        <taxon>Eukaryota</taxon>
        <taxon>Metazoa</taxon>
        <taxon>Chordata</taxon>
        <taxon>Craniata</taxon>
        <taxon>Vertebrata</taxon>
        <taxon>Euteleostomi</taxon>
        <taxon>Mammalia</taxon>
        <taxon>Eutheria</taxon>
        <taxon>Euarchontoglires</taxon>
        <taxon>Glires</taxon>
        <taxon>Rodentia</taxon>
        <taxon>Myomorpha</taxon>
        <taxon>Muroidea</taxon>
        <taxon>Muridae</taxon>
        <taxon>Murinae</taxon>
        <taxon>Mus</taxon>
        <taxon>Mus</taxon>
    </lineage>
</organism>
<comment type="function">
    <text>Potential odorant receptor.</text>
</comment>
<comment type="subcellular location">
    <subcellularLocation>
        <location evidence="3">Cell membrane</location>
        <topology evidence="1">Multi-pass membrane protein</topology>
    </subcellularLocation>
</comment>
<comment type="similarity">
    <text evidence="2">Belongs to the G-protein coupled receptor 1 family.</text>
</comment>
<reference key="1">
    <citation type="journal article" date="2002" name="Nat. Neurosci.">
        <title>The olfactory receptor gene superfamily of the mouse.</title>
        <authorList>
            <person name="Zhang X."/>
            <person name="Firestein S."/>
        </authorList>
    </citation>
    <scope>NUCLEOTIDE SEQUENCE [GENOMIC DNA]</scope>
</reference>
<reference key="2">
    <citation type="journal article" date="2002" name="Hum. Mol. Genet.">
        <title>Different evolutionary processes shaped the mouse and human olfactory receptor gene families.</title>
        <authorList>
            <person name="Young J.M."/>
            <person name="Friedman C."/>
            <person name="Williams E.M."/>
            <person name="Ross J.A."/>
            <person name="Tonnes-Priddy L."/>
            <person name="Trask B.J."/>
        </authorList>
    </citation>
    <scope>NUCLEOTIDE SEQUENCE [GENOMIC DNA]</scope>
</reference>
<reference key="3">
    <citation type="journal article" date="2002" name="Hum. Mol. Genet.">
        <authorList>
            <person name="Young J.M."/>
            <person name="Friedman C."/>
            <person name="Williams E.M."/>
            <person name="Ross J.A."/>
            <person name="Tonnes-Priddy L."/>
            <person name="Trask B.J."/>
        </authorList>
    </citation>
    <scope>ERRATUM OF PUBMED:11875048</scope>
</reference>
<keyword id="KW-1003">Cell membrane</keyword>
<keyword id="KW-1015">Disulfide bond</keyword>
<keyword id="KW-0297">G-protein coupled receptor</keyword>
<keyword id="KW-0325">Glycoprotein</keyword>
<keyword id="KW-0472">Membrane</keyword>
<keyword id="KW-0552">Olfaction</keyword>
<keyword id="KW-0675">Receptor</keyword>
<keyword id="KW-1185">Reference proteome</keyword>
<keyword id="KW-0716">Sensory transduction</keyword>
<keyword id="KW-0807">Transducer</keyword>
<keyword id="KW-0812">Transmembrane</keyword>
<keyword id="KW-1133">Transmembrane helix</keyword>
<gene>
    <name evidence="4" type="primary">Or5p51</name>
    <name evidence="4" type="synonym">Mor204-22</name>
    <name evidence="4" type="synonym">Olfr470</name>
</gene>
<evidence type="ECO:0000255" key="1"/>
<evidence type="ECO:0000255" key="2">
    <source>
        <dbReference type="PROSITE-ProRule" id="PRU00521"/>
    </source>
</evidence>
<evidence type="ECO:0000305" key="3"/>
<evidence type="ECO:0000312" key="4">
    <source>
        <dbReference type="MGI" id="MGI:3030304"/>
    </source>
</evidence>